<protein>
    <recommendedName>
        <fullName>Fibroblast growth factor receptor</fullName>
        <shortName>HrFGFR</shortName>
        <ecNumber>2.7.10.1</ecNumber>
    </recommendedName>
</protein>
<gene>
    <name type="primary">FGFR</name>
</gene>
<name>FGFR_HALRO</name>
<accession>Q95YM9</accession>
<reference key="1">
    <citation type="journal article" date="2001" name="Development">
        <title>FGF signals are involved in the differentiation of notochord cells and mesenchyme cells of the ascidian Halocynthia roretzi.</title>
        <authorList>
            <person name="Shimauchi Y."/>
            <person name="Murakami S.D."/>
            <person name="Satoh N."/>
        </authorList>
    </citation>
    <scope>NUCLEOTIDE SEQUENCE [MRNA]</scope>
    <scope>DEVELOPMENTAL STAGE</scope>
</reference>
<evidence type="ECO:0000250" key="1"/>
<evidence type="ECO:0000255" key="2"/>
<evidence type="ECO:0000255" key="3">
    <source>
        <dbReference type="PROSITE-ProRule" id="PRU00114"/>
    </source>
</evidence>
<evidence type="ECO:0000255" key="4">
    <source>
        <dbReference type="PROSITE-ProRule" id="PRU00159"/>
    </source>
</evidence>
<evidence type="ECO:0000255" key="5">
    <source>
        <dbReference type="PROSITE-ProRule" id="PRU10028"/>
    </source>
</evidence>
<evidence type="ECO:0000256" key="6">
    <source>
        <dbReference type="SAM" id="MobiDB-lite"/>
    </source>
</evidence>
<evidence type="ECO:0000269" key="7">
    <source>
    </source>
</evidence>
<evidence type="ECO:0000305" key="8"/>
<comment type="function">
    <text>Receptor for basic fibroblast growth factor.</text>
</comment>
<comment type="catalytic activity">
    <reaction evidence="5">
        <text>L-tyrosyl-[protein] + ATP = O-phospho-L-tyrosyl-[protein] + ADP + H(+)</text>
        <dbReference type="Rhea" id="RHEA:10596"/>
        <dbReference type="Rhea" id="RHEA-COMP:10136"/>
        <dbReference type="Rhea" id="RHEA-COMP:20101"/>
        <dbReference type="ChEBI" id="CHEBI:15378"/>
        <dbReference type="ChEBI" id="CHEBI:30616"/>
        <dbReference type="ChEBI" id="CHEBI:46858"/>
        <dbReference type="ChEBI" id="CHEBI:61978"/>
        <dbReference type="ChEBI" id="CHEBI:456216"/>
        <dbReference type="EC" id="2.7.10.1"/>
    </reaction>
</comment>
<comment type="subcellular location">
    <subcellularLocation>
        <location evidence="8">Membrane</location>
        <topology evidence="8">Single-pass membrane protein</topology>
    </subcellularLocation>
</comment>
<comment type="developmental stage">
    <text evidence="7">Maternally expressed transcript was ubiquitously distributed in fertilized eggs and in early embryos. Zygotic expression became evident by the neurula stage and transcripts were detected in epidermal cells of the posterior half of embryos.</text>
</comment>
<comment type="similarity">
    <text evidence="4">Belongs to the protein kinase superfamily. Tyr protein kinase family. Fibroblast growth factor receptor subfamily.</text>
</comment>
<dbReference type="EC" id="2.7.10.1"/>
<dbReference type="EMBL" id="AB046873">
    <property type="protein sequence ID" value="BAB59007.1"/>
    <property type="molecule type" value="mRNA"/>
</dbReference>
<dbReference type="SMR" id="Q95YM9"/>
<dbReference type="GlyCosmos" id="Q95YM9">
    <property type="glycosylation" value="6 sites, No reported glycans"/>
</dbReference>
<dbReference type="GO" id="GO:0005886">
    <property type="term" value="C:plasma membrane"/>
    <property type="evidence" value="ECO:0007669"/>
    <property type="project" value="TreeGrafter"/>
</dbReference>
<dbReference type="GO" id="GO:0043235">
    <property type="term" value="C:receptor complex"/>
    <property type="evidence" value="ECO:0007669"/>
    <property type="project" value="TreeGrafter"/>
</dbReference>
<dbReference type="GO" id="GO:0005524">
    <property type="term" value="F:ATP binding"/>
    <property type="evidence" value="ECO:0007669"/>
    <property type="project" value="UniProtKB-KW"/>
</dbReference>
<dbReference type="GO" id="GO:0017134">
    <property type="term" value="F:fibroblast growth factor binding"/>
    <property type="evidence" value="ECO:0007669"/>
    <property type="project" value="TreeGrafter"/>
</dbReference>
<dbReference type="GO" id="GO:0005007">
    <property type="term" value="F:fibroblast growth factor receptor activity"/>
    <property type="evidence" value="ECO:0007669"/>
    <property type="project" value="InterPro"/>
</dbReference>
<dbReference type="GO" id="GO:0008284">
    <property type="term" value="P:positive regulation of cell population proliferation"/>
    <property type="evidence" value="ECO:0007669"/>
    <property type="project" value="InterPro"/>
</dbReference>
<dbReference type="CDD" id="cd05053">
    <property type="entry name" value="PTKc_FGFR"/>
    <property type="match status" value="1"/>
</dbReference>
<dbReference type="FunFam" id="1.10.510.10:FF:000007">
    <property type="entry name" value="Fibroblast growth factor receptor"/>
    <property type="match status" value="1"/>
</dbReference>
<dbReference type="FunFam" id="2.60.40.10:FF:000016">
    <property type="entry name" value="Fibroblast growth factor receptor"/>
    <property type="match status" value="1"/>
</dbReference>
<dbReference type="FunFam" id="2.60.40.10:FF:000020">
    <property type="entry name" value="Fibroblast growth factor receptor"/>
    <property type="match status" value="1"/>
</dbReference>
<dbReference type="Gene3D" id="2.60.40.10">
    <property type="entry name" value="Immunoglobulins"/>
    <property type="match status" value="2"/>
</dbReference>
<dbReference type="Gene3D" id="3.30.200.20">
    <property type="entry name" value="Phosphorylase Kinase, domain 1"/>
    <property type="match status" value="1"/>
</dbReference>
<dbReference type="Gene3D" id="1.10.510.10">
    <property type="entry name" value="Transferase(Phosphotransferase) domain 1"/>
    <property type="match status" value="1"/>
</dbReference>
<dbReference type="InterPro" id="IPR016248">
    <property type="entry name" value="FGF_rcpt_fam"/>
</dbReference>
<dbReference type="InterPro" id="IPR007110">
    <property type="entry name" value="Ig-like_dom"/>
</dbReference>
<dbReference type="InterPro" id="IPR036179">
    <property type="entry name" value="Ig-like_dom_sf"/>
</dbReference>
<dbReference type="InterPro" id="IPR013783">
    <property type="entry name" value="Ig-like_fold"/>
</dbReference>
<dbReference type="InterPro" id="IPR013098">
    <property type="entry name" value="Ig_I-set"/>
</dbReference>
<dbReference type="InterPro" id="IPR003599">
    <property type="entry name" value="Ig_sub"/>
</dbReference>
<dbReference type="InterPro" id="IPR003598">
    <property type="entry name" value="Ig_sub2"/>
</dbReference>
<dbReference type="InterPro" id="IPR011009">
    <property type="entry name" value="Kinase-like_dom_sf"/>
</dbReference>
<dbReference type="InterPro" id="IPR000719">
    <property type="entry name" value="Prot_kinase_dom"/>
</dbReference>
<dbReference type="InterPro" id="IPR050122">
    <property type="entry name" value="RTK"/>
</dbReference>
<dbReference type="InterPro" id="IPR001245">
    <property type="entry name" value="Ser-Thr/Tyr_kinase_cat_dom"/>
</dbReference>
<dbReference type="InterPro" id="IPR008266">
    <property type="entry name" value="Tyr_kinase_AS"/>
</dbReference>
<dbReference type="InterPro" id="IPR020635">
    <property type="entry name" value="Tyr_kinase_cat_dom"/>
</dbReference>
<dbReference type="PANTHER" id="PTHR24416:SF550">
    <property type="entry name" value="FIBROBLAST GROWTH FACTOR RECEPTOR HOMOLOG 1-RELATED"/>
    <property type="match status" value="1"/>
</dbReference>
<dbReference type="PANTHER" id="PTHR24416">
    <property type="entry name" value="TYROSINE-PROTEIN KINASE RECEPTOR"/>
    <property type="match status" value="1"/>
</dbReference>
<dbReference type="Pfam" id="PF07679">
    <property type="entry name" value="I-set"/>
    <property type="match status" value="2"/>
</dbReference>
<dbReference type="Pfam" id="PF07714">
    <property type="entry name" value="PK_Tyr_Ser-Thr"/>
    <property type="match status" value="1"/>
</dbReference>
<dbReference type="PIRSF" id="PIRSF000628">
    <property type="entry name" value="FGFR"/>
    <property type="match status" value="1"/>
</dbReference>
<dbReference type="PRINTS" id="PR00109">
    <property type="entry name" value="TYRKINASE"/>
</dbReference>
<dbReference type="SMART" id="SM00409">
    <property type="entry name" value="IG"/>
    <property type="match status" value="2"/>
</dbReference>
<dbReference type="SMART" id="SM00408">
    <property type="entry name" value="IGc2"/>
    <property type="match status" value="2"/>
</dbReference>
<dbReference type="SMART" id="SM00219">
    <property type="entry name" value="TyrKc"/>
    <property type="match status" value="1"/>
</dbReference>
<dbReference type="SUPFAM" id="SSF48726">
    <property type="entry name" value="Immunoglobulin"/>
    <property type="match status" value="2"/>
</dbReference>
<dbReference type="SUPFAM" id="SSF56112">
    <property type="entry name" value="Protein kinase-like (PK-like)"/>
    <property type="match status" value="1"/>
</dbReference>
<dbReference type="PROSITE" id="PS50835">
    <property type="entry name" value="IG_LIKE"/>
    <property type="match status" value="2"/>
</dbReference>
<dbReference type="PROSITE" id="PS50011">
    <property type="entry name" value="PROTEIN_KINASE_DOM"/>
    <property type="match status" value="1"/>
</dbReference>
<dbReference type="PROSITE" id="PS00109">
    <property type="entry name" value="PROTEIN_KINASE_TYR"/>
    <property type="match status" value="1"/>
</dbReference>
<keyword id="KW-0067">ATP-binding</keyword>
<keyword id="KW-1015">Disulfide bond</keyword>
<keyword id="KW-0325">Glycoprotein</keyword>
<keyword id="KW-0393">Immunoglobulin domain</keyword>
<keyword id="KW-0418">Kinase</keyword>
<keyword id="KW-0472">Membrane</keyword>
<keyword id="KW-0547">Nucleotide-binding</keyword>
<keyword id="KW-0597">Phosphoprotein</keyword>
<keyword id="KW-0675">Receptor</keyword>
<keyword id="KW-0677">Repeat</keyword>
<keyword id="KW-0732">Signal</keyword>
<keyword id="KW-0808">Transferase</keyword>
<keyword id="KW-0812">Transmembrane</keyword>
<keyword id="KW-1133">Transmembrane helix</keyword>
<keyword id="KW-0829">Tyrosine-protein kinase</keyword>
<feature type="signal peptide" evidence="2">
    <location>
        <begin position="1"/>
        <end position="27"/>
    </location>
</feature>
<feature type="chain" id="PRO_0000249215" description="Fibroblast growth factor receptor">
    <location>
        <begin position="28"/>
        <end position="763"/>
    </location>
</feature>
<feature type="topological domain" description="Extracellular" evidence="2">
    <location>
        <begin position="28"/>
        <end position="291"/>
    </location>
</feature>
<feature type="transmembrane region" description="Helical" evidence="2">
    <location>
        <begin position="292"/>
        <end position="312"/>
    </location>
</feature>
<feature type="topological domain" description="Cytoplasmic" evidence="2">
    <location>
        <begin position="313"/>
        <end position="763"/>
    </location>
</feature>
<feature type="domain" description="Ig-like C2-type 1">
    <location>
        <begin position="73"/>
        <end position="164"/>
    </location>
</feature>
<feature type="domain" description="Ig-like C2-type 2">
    <location>
        <begin position="173"/>
        <end position="270"/>
    </location>
</feature>
<feature type="domain" description="Protein kinase" evidence="4">
    <location>
        <begin position="382"/>
        <end position="672"/>
    </location>
</feature>
<feature type="region of interest" description="Disordered" evidence="6">
    <location>
        <begin position="34"/>
        <end position="74"/>
    </location>
</feature>
<feature type="region of interest" description="Disordered" evidence="6">
    <location>
        <begin position="691"/>
        <end position="742"/>
    </location>
</feature>
<feature type="compositionally biased region" description="Acidic residues" evidence="6">
    <location>
        <begin position="691"/>
        <end position="711"/>
    </location>
</feature>
<feature type="active site" description="Proton acceptor" evidence="4 5">
    <location>
        <position position="537"/>
    </location>
</feature>
<feature type="binding site" evidence="4">
    <location>
        <begin position="388"/>
        <end position="396"/>
    </location>
    <ligand>
        <name>ATP</name>
        <dbReference type="ChEBI" id="CHEBI:30616"/>
    </ligand>
</feature>
<feature type="binding site" evidence="4">
    <location>
        <position position="417"/>
    </location>
    <ligand>
        <name>ATP</name>
        <dbReference type="ChEBI" id="CHEBI:30616"/>
    </ligand>
</feature>
<feature type="modified residue" description="Phosphotyrosine; by autocatalysis" evidence="1">
    <location>
        <position position="568"/>
    </location>
</feature>
<feature type="glycosylation site" description="N-linked (GlcNAc...) asparagine" evidence="2">
    <location>
        <position position="158"/>
    </location>
</feature>
<feature type="glycosylation site" description="N-linked (GlcNAc...) asparagine" evidence="2">
    <location>
        <position position="182"/>
    </location>
</feature>
<feature type="glycosylation site" description="N-linked (GlcNAc...) asparagine" evidence="2">
    <location>
        <position position="220"/>
    </location>
</feature>
<feature type="glycosylation site" description="N-linked (GlcNAc...) asparagine" evidence="2">
    <location>
        <position position="230"/>
    </location>
</feature>
<feature type="glycosylation site" description="N-linked (GlcNAc...) asparagine" evidence="2">
    <location>
        <position position="243"/>
    </location>
</feature>
<feature type="glycosylation site" description="N-linked (GlcNAc...) asparagine" evidence="2">
    <location>
        <position position="288"/>
    </location>
</feature>
<feature type="disulfide bond" evidence="3">
    <location>
        <begin position="98"/>
        <end position="148"/>
    </location>
</feature>
<feature type="disulfide bond" evidence="3">
    <location>
        <begin position="195"/>
        <end position="254"/>
    </location>
</feature>
<organism>
    <name type="scientific">Halocynthia roretzi</name>
    <name type="common">Sea squirt</name>
    <name type="synonym">Cynthia roretzi</name>
    <dbReference type="NCBI Taxonomy" id="7729"/>
    <lineage>
        <taxon>Eukaryota</taxon>
        <taxon>Metazoa</taxon>
        <taxon>Chordata</taxon>
        <taxon>Tunicata</taxon>
        <taxon>Ascidiacea</taxon>
        <taxon>Stolidobranchia</taxon>
        <taxon>Pyuridae</taxon>
        <taxon>Halocynthia</taxon>
    </lineage>
</organism>
<sequence length="763" mass="86741">MKEFEVKVASTAFVLVLFSLTINQILASETSTKFRSPVPAPTVPDWNHLPNEGNEENVVSAPKQDGASGGQKPYWTKREKMMKRLHAEPAGNTVRFRCAVDGNPKPQVLWYKNDLIVQKNDRVGGYKYRNQVLILESVVLSDKGNYMCVARNEYGSINHTYQLDVQERSASKPILAEGLPQNKSAYIGDDVTFKCKVYSDAHPHIQWLKSINNHNNAAPNYTVLKAAGVNTTDLDMEVLILKNVSFEEAGEYTCLAGNSIGISHQSAWLSVLPVPPPTTDTITKGIPNETNIIIYVMCGVLVILFGLAVVLVLYYHCYNGKDPPMLVRIENPDNIPPMTKIEHPTMLFGNTQAWQRMCMPMQEPFEFNIQLDLQWELQREDITLVERLDEGFFGQVFKADLVTCNNTRKEKMVCAVKMLKGNRNEKDVLDLLTEMDQMKRVGKHKNIINLLGVCTQNGPLWLVIEYAAQGNLRDYLRRNRPQNTLCNLVLPSEGRNPDDELPVPHGDTLTQKDIVSFAFQVARGLEFLAQKKCIHRDLAARNVLVTEELVMKIADFGLARDIRSCDYYRKHTRGHLPYKWMALEAMSDNIFTHATDVWSFGVLLWEIFSLAGSPYPGIKTHELVKFLRSGERLDKPQYASQEMYRLMRDCWEEDPSKRPNFRTLVEDLDRMLAESSTEVYIDFAAGCEAEYSESSEDESESQNSDEEDDDSVFERMRQIDSLSNGNIPFNEEDSSNSDPYVAPLLQNEENVLQNEHARLRSEA</sequence>
<proteinExistence type="evidence at transcript level"/>